<name>RL29_CAMJ8</name>
<keyword id="KW-0687">Ribonucleoprotein</keyword>
<keyword id="KW-0689">Ribosomal protein</keyword>
<organism>
    <name type="scientific">Campylobacter jejuni subsp. jejuni serotype O:6 (strain 81116 / NCTC 11828)</name>
    <dbReference type="NCBI Taxonomy" id="407148"/>
    <lineage>
        <taxon>Bacteria</taxon>
        <taxon>Pseudomonadati</taxon>
        <taxon>Campylobacterota</taxon>
        <taxon>Epsilonproteobacteria</taxon>
        <taxon>Campylobacterales</taxon>
        <taxon>Campylobacteraceae</taxon>
        <taxon>Campylobacter</taxon>
    </lineage>
</organism>
<accession>A8FP13</accession>
<dbReference type="EMBL" id="CP000814">
    <property type="protein sequence ID" value="ABV53200.1"/>
    <property type="molecule type" value="Genomic_DNA"/>
</dbReference>
<dbReference type="RefSeq" id="WP_002851566.1">
    <property type="nucleotide sequence ID" value="NC_009839.1"/>
</dbReference>
<dbReference type="SMR" id="A8FP13"/>
<dbReference type="KEGG" id="cju:C8J_1603"/>
<dbReference type="HOGENOM" id="CLU_158491_7_1_7"/>
<dbReference type="GO" id="GO:1990904">
    <property type="term" value="C:ribonucleoprotein complex"/>
    <property type="evidence" value="ECO:0007669"/>
    <property type="project" value="UniProtKB-KW"/>
</dbReference>
<dbReference type="GO" id="GO:0005840">
    <property type="term" value="C:ribosome"/>
    <property type="evidence" value="ECO:0007669"/>
    <property type="project" value="UniProtKB-KW"/>
</dbReference>
<dbReference type="GO" id="GO:0003735">
    <property type="term" value="F:structural constituent of ribosome"/>
    <property type="evidence" value="ECO:0007669"/>
    <property type="project" value="InterPro"/>
</dbReference>
<dbReference type="GO" id="GO:0006412">
    <property type="term" value="P:translation"/>
    <property type="evidence" value="ECO:0007669"/>
    <property type="project" value="UniProtKB-UniRule"/>
</dbReference>
<dbReference type="CDD" id="cd00427">
    <property type="entry name" value="Ribosomal_L29_HIP"/>
    <property type="match status" value="1"/>
</dbReference>
<dbReference type="FunFam" id="1.10.287.310:FF:000007">
    <property type="entry name" value="50S ribosomal protein L29"/>
    <property type="match status" value="1"/>
</dbReference>
<dbReference type="Gene3D" id="1.10.287.310">
    <property type="match status" value="1"/>
</dbReference>
<dbReference type="HAMAP" id="MF_00374">
    <property type="entry name" value="Ribosomal_uL29"/>
    <property type="match status" value="1"/>
</dbReference>
<dbReference type="InterPro" id="IPR001854">
    <property type="entry name" value="Ribosomal_uL29"/>
</dbReference>
<dbReference type="InterPro" id="IPR018254">
    <property type="entry name" value="Ribosomal_uL29_CS"/>
</dbReference>
<dbReference type="InterPro" id="IPR036049">
    <property type="entry name" value="Ribosomal_uL29_sf"/>
</dbReference>
<dbReference type="NCBIfam" id="TIGR00012">
    <property type="entry name" value="L29"/>
    <property type="match status" value="1"/>
</dbReference>
<dbReference type="Pfam" id="PF00831">
    <property type="entry name" value="Ribosomal_L29"/>
    <property type="match status" value="1"/>
</dbReference>
<dbReference type="SUPFAM" id="SSF46561">
    <property type="entry name" value="Ribosomal protein L29 (L29p)"/>
    <property type="match status" value="1"/>
</dbReference>
<dbReference type="PROSITE" id="PS00579">
    <property type="entry name" value="RIBOSOMAL_L29"/>
    <property type="match status" value="1"/>
</dbReference>
<sequence>MKYTEIKDKTAAELATMLKEKKVLLFTLKQKLKTMQLTNPKEISQVKKDIARINTAINALR</sequence>
<protein>
    <recommendedName>
        <fullName evidence="1">Large ribosomal subunit protein uL29</fullName>
    </recommendedName>
    <alternativeName>
        <fullName evidence="2">50S ribosomal protein L29</fullName>
    </alternativeName>
</protein>
<feature type="chain" id="PRO_1000072141" description="Large ribosomal subunit protein uL29">
    <location>
        <begin position="1"/>
        <end position="61"/>
    </location>
</feature>
<reference key="1">
    <citation type="journal article" date="2007" name="J. Bacteriol.">
        <title>The complete genome sequence of Campylobacter jejuni strain 81116 (NCTC11828).</title>
        <authorList>
            <person name="Pearson B.M."/>
            <person name="Gaskin D.J.H."/>
            <person name="Segers R.P.A.M."/>
            <person name="Wells J.M."/>
            <person name="Nuijten P.J.M."/>
            <person name="van Vliet A.H.M."/>
        </authorList>
    </citation>
    <scope>NUCLEOTIDE SEQUENCE [LARGE SCALE GENOMIC DNA]</scope>
    <source>
        <strain>81116 / NCTC 11828</strain>
    </source>
</reference>
<comment type="similarity">
    <text evidence="1">Belongs to the universal ribosomal protein uL29 family.</text>
</comment>
<evidence type="ECO:0000255" key="1">
    <source>
        <dbReference type="HAMAP-Rule" id="MF_00374"/>
    </source>
</evidence>
<evidence type="ECO:0000305" key="2"/>
<gene>
    <name evidence="1" type="primary">rpmC</name>
    <name type="ordered locus">C8J_1603</name>
</gene>
<proteinExistence type="inferred from homology"/>